<protein>
    <recommendedName>
        <fullName evidence="1">Urease accessory protein UreE</fullName>
    </recommendedName>
</protein>
<evidence type="ECO:0000255" key="1">
    <source>
        <dbReference type="HAMAP-Rule" id="MF_00822"/>
    </source>
</evidence>
<evidence type="ECO:0000256" key="2">
    <source>
        <dbReference type="SAM" id="MobiDB-lite"/>
    </source>
</evidence>
<keyword id="KW-0143">Chaperone</keyword>
<keyword id="KW-0963">Cytoplasm</keyword>
<keyword id="KW-0533">Nickel</keyword>
<keyword id="KW-0996">Nickel insertion</keyword>
<keyword id="KW-1185">Reference proteome</keyword>
<accession>Q21P93</accession>
<gene>
    <name evidence="1" type="primary">ureE</name>
    <name type="ordered locus">Sde_0222</name>
</gene>
<feature type="chain" id="PRO_1000083910" description="Urease accessory protein UreE">
    <location>
        <begin position="1"/>
        <end position="168"/>
    </location>
</feature>
<feature type="region of interest" description="Disordered" evidence="2">
    <location>
        <begin position="137"/>
        <end position="168"/>
    </location>
</feature>
<feature type="compositionally biased region" description="Basic residues" evidence="2">
    <location>
        <begin position="151"/>
        <end position="161"/>
    </location>
</feature>
<proteinExistence type="inferred from homology"/>
<reference key="1">
    <citation type="journal article" date="2008" name="PLoS Genet.">
        <title>Complete genome sequence of the complex carbohydrate-degrading marine bacterium, Saccharophagus degradans strain 2-40 T.</title>
        <authorList>
            <person name="Weiner R.M."/>
            <person name="Taylor L.E. II"/>
            <person name="Henrissat B."/>
            <person name="Hauser L."/>
            <person name="Land M."/>
            <person name="Coutinho P.M."/>
            <person name="Rancurel C."/>
            <person name="Saunders E.H."/>
            <person name="Longmire A.G."/>
            <person name="Zhang H."/>
            <person name="Bayer E.A."/>
            <person name="Gilbert H.J."/>
            <person name="Larimer F."/>
            <person name="Zhulin I.B."/>
            <person name="Ekborg N.A."/>
            <person name="Lamed R."/>
            <person name="Richardson P.M."/>
            <person name="Borovok I."/>
            <person name="Hutcheson S."/>
        </authorList>
    </citation>
    <scope>NUCLEOTIDE SEQUENCE [LARGE SCALE GENOMIC DNA]</scope>
    <source>
        <strain>2-40 / ATCC 43961 / DSM 17024</strain>
    </source>
</reference>
<sequence>MLEIYEVIPAQEMQNKQTQLTVELRFDERQKSRHKTQTTCGKDLGWFIERGYVLAHGEGLQSKCGEIITVVAAKESVSEVTAENTHQLMRAAYHLGNRHVPLQVDPTKLAYLHDHVLDDMVRGLGLTVTAAQAPFTPESGAYHGTTGHGGGHSHSHGHSHDHHHDHSH</sequence>
<organism>
    <name type="scientific">Saccharophagus degradans (strain 2-40 / ATCC 43961 / DSM 17024)</name>
    <dbReference type="NCBI Taxonomy" id="203122"/>
    <lineage>
        <taxon>Bacteria</taxon>
        <taxon>Pseudomonadati</taxon>
        <taxon>Pseudomonadota</taxon>
        <taxon>Gammaproteobacteria</taxon>
        <taxon>Cellvibrionales</taxon>
        <taxon>Cellvibrionaceae</taxon>
        <taxon>Saccharophagus</taxon>
    </lineage>
</organism>
<name>UREE_SACD2</name>
<dbReference type="EMBL" id="CP000282">
    <property type="protein sequence ID" value="ABD79486.1"/>
    <property type="molecule type" value="Genomic_DNA"/>
</dbReference>
<dbReference type="RefSeq" id="WP_011466710.1">
    <property type="nucleotide sequence ID" value="NC_007912.1"/>
</dbReference>
<dbReference type="SMR" id="Q21P93"/>
<dbReference type="STRING" id="203122.Sde_0222"/>
<dbReference type="GeneID" id="98611928"/>
<dbReference type="KEGG" id="sde:Sde_0222"/>
<dbReference type="eggNOG" id="COG2371">
    <property type="taxonomic scope" value="Bacteria"/>
</dbReference>
<dbReference type="HOGENOM" id="CLU_093757_2_0_6"/>
<dbReference type="Proteomes" id="UP000001947">
    <property type="component" value="Chromosome"/>
</dbReference>
<dbReference type="GO" id="GO:0005737">
    <property type="term" value="C:cytoplasm"/>
    <property type="evidence" value="ECO:0007669"/>
    <property type="project" value="UniProtKB-SubCell"/>
</dbReference>
<dbReference type="GO" id="GO:0016151">
    <property type="term" value="F:nickel cation binding"/>
    <property type="evidence" value="ECO:0007669"/>
    <property type="project" value="UniProtKB-UniRule"/>
</dbReference>
<dbReference type="GO" id="GO:0051082">
    <property type="term" value="F:unfolded protein binding"/>
    <property type="evidence" value="ECO:0007669"/>
    <property type="project" value="UniProtKB-UniRule"/>
</dbReference>
<dbReference type="GO" id="GO:0006457">
    <property type="term" value="P:protein folding"/>
    <property type="evidence" value="ECO:0007669"/>
    <property type="project" value="InterPro"/>
</dbReference>
<dbReference type="GO" id="GO:0065003">
    <property type="term" value="P:protein-containing complex assembly"/>
    <property type="evidence" value="ECO:0007669"/>
    <property type="project" value="InterPro"/>
</dbReference>
<dbReference type="GO" id="GO:0019627">
    <property type="term" value="P:urea metabolic process"/>
    <property type="evidence" value="ECO:0007669"/>
    <property type="project" value="InterPro"/>
</dbReference>
<dbReference type="CDD" id="cd00571">
    <property type="entry name" value="UreE"/>
    <property type="match status" value="1"/>
</dbReference>
<dbReference type="Gene3D" id="2.60.260.20">
    <property type="entry name" value="Urease metallochaperone UreE, N-terminal domain"/>
    <property type="match status" value="1"/>
</dbReference>
<dbReference type="Gene3D" id="3.30.70.790">
    <property type="entry name" value="UreE, C-terminal domain"/>
    <property type="match status" value="1"/>
</dbReference>
<dbReference type="HAMAP" id="MF_00822">
    <property type="entry name" value="UreE"/>
    <property type="match status" value="1"/>
</dbReference>
<dbReference type="InterPro" id="IPR012406">
    <property type="entry name" value="UreE"/>
</dbReference>
<dbReference type="InterPro" id="IPR007864">
    <property type="entry name" value="UreE_C_dom"/>
</dbReference>
<dbReference type="InterPro" id="IPR004029">
    <property type="entry name" value="UreE_N"/>
</dbReference>
<dbReference type="InterPro" id="IPR036118">
    <property type="entry name" value="UreE_N_sf"/>
</dbReference>
<dbReference type="NCBIfam" id="NF009751">
    <property type="entry name" value="PRK13261.1-1"/>
    <property type="match status" value="1"/>
</dbReference>
<dbReference type="Pfam" id="PF05194">
    <property type="entry name" value="UreE_C"/>
    <property type="match status" value="1"/>
</dbReference>
<dbReference type="Pfam" id="PF02814">
    <property type="entry name" value="UreE_N"/>
    <property type="match status" value="1"/>
</dbReference>
<dbReference type="PIRSF" id="PIRSF036402">
    <property type="entry name" value="Ureas_acces_UreE"/>
    <property type="match status" value="1"/>
</dbReference>
<dbReference type="SMART" id="SM00988">
    <property type="entry name" value="UreE_N"/>
    <property type="match status" value="1"/>
</dbReference>
<dbReference type="SUPFAM" id="SSF69737">
    <property type="entry name" value="Urease metallochaperone UreE, C-terminal domain"/>
    <property type="match status" value="1"/>
</dbReference>
<dbReference type="SUPFAM" id="SSF69287">
    <property type="entry name" value="Urease metallochaperone UreE, N-terminal domain"/>
    <property type="match status" value="1"/>
</dbReference>
<comment type="function">
    <text evidence="1">Involved in urease metallocenter assembly. Binds nickel. Probably functions as a nickel donor during metallocenter assembly.</text>
</comment>
<comment type="subcellular location">
    <subcellularLocation>
        <location evidence="1">Cytoplasm</location>
    </subcellularLocation>
</comment>
<comment type="similarity">
    <text evidence="1">Belongs to the UreE family.</text>
</comment>